<accession>P24790</accession>
<dbReference type="EMBL" id="X16844">
    <property type="protein sequence ID" value="CAA34742.1"/>
    <property type="molecule type" value="mRNA"/>
</dbReference>
<dbReference type="PIR" id="B43549">
    <property type="entry name" value="B43549"/>
</dbReference>
<dbReference type="SMR" id="P24790"/>
<dbReference type="AGR" id="Xenbase:XB-GENE-6255792"/>
<dbReference type="Xenbase" id="XB-GENE-6255792">
    <property type="gene designation" value="vim.S"/>
</dbReference>
<dbReference type="OMA" id="AMYEQQP"/>
<dbReference type="Proteomes" id="UP000186698">
    <property type="component" value="Unplaced"/>
</dbReference>
<dbReference type="GO" id="GO:0030424">
    <property type="term" value="C:axon"/>
    <property type="evidence" value="ECO:0000318"/>
    <property type="project" value="GO_Central"/>
</dbReference>
<dbReference type="GO" id="GO:0005737">
    <property type="term" value="C:cytoplasm"/>
    <property type="evidence" value="ECO:0007669"/>
    <property type="project" value="TreeGrafter"/>
</dbReference>
<dbReference type="GO" id="GO:0005882">
    <property type="term" value="C:intermediate filament"/>
    <property type="evidence" value="ECO:0000318"/>
    <property type="project" value="GO_Central"/>
</dbReference>
<dbReference type="GO" id="GO:0005886">
    <property type="term" value="C:plasma membrane"/>
    <property type="evidence" value="ECO:0000318"/>
    <property type="project" value="GO_Central"/>
</dbReference>
<dbReference type="GO" id="GO:0005200">
    <property type="term" value="F:structural constituent of cytoskeleton"/>
    <property type="evidence" value="ECO:0000318"/>
    <property type="project" value="GO_Central"/>
</dbReference>
<dbReference type="GO" id="GO:0045109">
    <property type="term" value="P:intermediate filament organization"/>
    <property type="evidence" value="ECO:0000318"/>
    <property type="project" value="GO_Central"/>
</dbReference>
<dbReference type="FunFam" id="1.20.5.1160:FF:000001">
    <property type="entry name" value="Keratin type II"/>
    <property type="match status" value="1"/>
</dbReference>
<dbReference type="FunFam" id="1.20.5.170:FF:000002">
    <property type="entry name" value="Type I keratin KA11"/>
    <property type="match status" value="1"/>
</dbReference>
<dbReference type="FunFam" id="1.20.5.500:FF:000001">
    <property type="entry name" value="Type II keratin 23"/>
    <property type="match status" value="1"/>
</dbReference>
<dbReference type="Gene3D" id="1.20.5.170">
    <property type="match status" value="1"/>
</dbReference>
<dbReference type="Gene3D" id="1.20.5.500">
    <property type="entry name" value="Single helix bin"/>
    <property type="match status" value="1"/>
</dbReference>
<dbReference type="Gene3D" id="1.20.5.1160">
    <property type="entry name" value="Vasodilator-stimulated phosphoprotein"/>
    <property type="match status" value="1"/>
</dbReference>
<dbReference type="InterPro" id="IPR018039">
    <property type="entry name" value="IF_conserved"/>
</dbReference>
<dbReference type="InterPro" id="IPR039008">
    <property type="entry name" value="IF_rod_dom"/>
</dbReference>
<dbReference type="InterPro" id="IPR006821">
    <property type="entry name" value="Intermed_filament_DNA-bd"/>
</dbReference>
<dbReference type="InterPro" id="IPR050405">
    <property type="entry name" value="Intermediate_filament"/>
</dbReference>
<dbReference type="PANTHER" id="PTHR45652">
    <property type="entry name" value="GLIAL FIBRILLARY ACIDIC PROTEIN"/>
    <property type="match status" value="1"/>
</dbReference>
<dbReference type="PANTHER" id="PTHR45652:SF5">
    <property type="entry name" value="VIMENTIN"/>
    <property type="match status" value="1"/>
</dbReference>
<dbReference type="Pfam" id="PF00038">
    <property type="entry name" value="Filament"/>
    <property type="match status" value="1"/>
</dbReference>
<dbReference type="Pfam" id="PF04732">
    <property type="entry name" value="Filament_head"/>
    <property type="match status" value="1"/>
</dbReference>
<dbReference type="SMART" id="SM01391">
    <property type="entry name" value="Filament"/>
    <property type="match status" value="1"/>
</dbReference>
<dbReference type="SUPFAM" id="SSF64593">
    <property type="entry name" value="Intermediate filament protein, coiled coil region"/>
    <property type="match status" value="2"/>
</dbReference>
<dbReference type="PROSITE" id="PS00226">
    <property type="entry name" value="IF_ROD_1"/>
    <property type="match status" value="1"/>
</dbReference>
<dbReference type="PROSITE" id="PS51842">
    <property type="entry name" value="IF_ROD_2"/>
    <property type="match status" value="1"/>
</dbReference>
<reference key="1">
    <citation type="journal article" date="1989" name="Development">
        <title>Expression of intermediate filament proteins during development of Xenopus laevis. I. cDNA clones encoding different forms of vimentin.</title>
        <authorList>
            <person name="Herrmann H."/>
            <person name="Fouquet B."/>
            <person name="Franke W.W."/>
        </authorList>
    </citation>
    <scope>NUCLEOTIDE SEQUENCE [MRNA]</scope>
</reference>
<reference key="2">
    <citation type="journal article" date="1988" name="Development">
        <title>Developmental expression of a neurofilament-M and two vimentin-like genes in Xenopus laevis.</title>
        <authorList>
            <person name="Sharpe C.R."/>
        </authorList>
    </citation>
    <scope>NUCLEOTIDE SEQUENCE [MRNA] OF 331-404</scope>
</reference>
<organism>
    <name type="scientific">Xenopus laevis</name>
    <name type="common">African clawed frog</name>
    <dbReference type="NCBI Taxonomy" id="8355"/>
    <lineage>
        <taxon>Eukaryota</taxon>
        <taxon>Metazoa</taxon>
        <taxon>Chordata</taxon>
        <taxon>Craniata</taxon>
        <taxon>Vertebrata</taxon>
        <taxon>Euteleostomi</taxon>
        <taxon>Amphibia</taxon>
        <taxon>Batrachia</taxon>
        <taxon>Anura</taxon>
        <taxon>Pipoidea</taxon>
        <taxon>Pipidae</taxon>
        <taxon>Xenopodinae</taxon>
        <taxon>Xenopus</taxon>
        <taxon>Xenopus</taxon>
    </lineage>
</organism>
<evidence type="ECO:0000255" key="1"/>
<evidence type="ECO:0000255" key="2">
    <source>
        <dbReference type="PROSITE-ProRule" id="PRU01188"/>
    </source>
</evidence>
<evidence type="ECO:0000256" key="3">
    <source>
        <dbReference type="SAM" id="MobiDB-lite"/>
    </source>
</evidence>
<name>VIM4_XENLA</name>
<feature type="chain" id="PRO_0000063763" description="Vimentin-4">
    <location>
        <begin position="1"/>
        <end position="463"/>
    </location>
</feature>
<feature type="domain" description="IF rod" evidence="2">
    <location>
        <begin position="97"/>
        <end position="405"/>
    </location>
</feature>
<feature type="region of interest" description="Head">
    <location>
        <begin position="1"/>
        <end position="89"/>
    </location>
</feature>
<feature type="region of interest" description="Disordered" evidence="3">
    <location>
        <begin position="1"/>
        <end position="47"/>
    </location>
</feature>
<feature type="region of interest" description="Coil 1A">
    <location>
        <begin position="90"/>
        <end position="125"/>
    </location>
</feature>
<feature type="region of interest" description="Linker 1">
    <location>
        <begin position="126"/>
        <end position="147"/>
    </location>
</feature>
<feature type="region of interest" description="Coil 1B">
    <location>
        <begin position="148"/>
        <end position="239"/>
    </location>
</feature>
<feature type="region of interest" description="Linker 12">
    <location>
        <begin position="240"/>
        <end position="262"/>
    </location>
</feature>
<feature type="region of interest" description="Coil 2">
    <location>
        <begin position="263"/>
        <end position="401"/>
    </location>
</feature>
<feature type="region of interest" description="Tail">
    <location>
        <begin position="402"/>
        <end position="463"/>
    </location>
</feature>
<feature type="compositionally biased region" description="Low complexity" evidence="3">
    <location>
        <begin position="17"/>
        <end position="37"/>
    </location>
</feature>
<feature type="site" description="Stutter" evidence="1">
    <location>
        <position position="345"/>
    </location>
</feature>
<protein>
    <recommendedName>
        <fullName>Vimentin-4</fullName>
    </recommendedName>
</protein>
<gene>
    <name type="primary">vim4</name>
</gene>
<proteinExistence type="evidence at transcript level"/>
<keyword id="KW-0175">Coiled coil</keyword>
<keyword id="KW-0403">Intermediate filament</keyword>
<keyword id="KW-1185">Reference proteome</keyword>
<comment type="function">
    <text>Vimentins are class-III intermediate filaments found in various non-epithelial cells, especially mesenchymal cells. Vimentin is attached to the nucleus, endoplasmic reticulum, and mitochondria, either laterally or terminally.</text>
</comment>
<comment type="subunit">
    <text>Homomer.</text>
</comment>
<comment type="PTM">
    <text>One of the most prominent phosphoproteins in various cells of mesenchymal origin. Phosphorylation is enhanced during cell division, at which time vimentin filaments are significantly reorganized.</text>
</comment>
<comment type="similarity">
    <text evidence="2">Belongs to the intermediate filament family.</text>
</comment>
<sequence>MATTKSSYRRIFGGNPRSSSSGSRYVTSSSRYSLGSSMRPGTSSSRMVYSTSASPAVFKSSSVRLRSSLPPARMADSVDFTLADAVNLEFKANRTNEKAEMIELNDRFANFIDKVRFLEQQNKILVAELEQLKGKGTSRIGDLYEEEMREIRRQLDQAINEKARVEVDRDNLGDDLQRLREKLQDEMIQREEAEGNLQSFRQDVDNASLARIDLERKVESLQEEIVFLKKLHDEEIRELQLQIQESHIQVDMDVSKPDLTAALRDVRQQYENVASKNLADAEDWYKSKFADLSEAANRNNEALRQAKQDTNDYRRQIQTLTCEIDAMKGSNESYERQMREMEENFALEAANYQDTIQRLQEEIQNMKEEMSRHLREYQDLLNVKMALDIEIATYRKLLEGEESRITIPVHSFSTMSLRETNLDSHPVDTHSKRTLLIKTVETRDGQVINESSQHHDDLDLDLE</sequence>